<protein>
    <recommendedName>
        <fullName evidence="2">Lipase chaperone</fullName>
    </recommendedName>
    <alternativeName>
        <fullName evidence="2">Lipase activator protein</fullName>
    </alternativeName>
    <alternativeName>
        <fullName evidence="2">Lipase foldase</fullName>
    </alternativeName>
    <alternativeName>
        <fullName evidence="2">Lipase helper protein</fullName>
    </alternativeName>
    <alternativeName>
        <fullName evidence="2">Lipase modulator</fullName>
    </alternativeName>
</protein>
<gene>
    <name evidence="2" type="primary">lifO</name>
    <name type="ordered locus">Bcen_4450</name>
</gene>
<keyword id="KW-0997">Cell inner membrane</keyword>
<keyword id="KW-1003">Cell membrane</keyword>
<keyword id="KW-0143">Chaperone</keyword>
<keyword id="KW-0442">Lipid degradation</keyword>
<keyword id="KW-0443">Lipid metabolism</keyword>
<keyword id="KW-0472">Membrane</keyword>
<keyword id="KW-0812">Transmembrane</keyword>
<keyword id="KW-1133">Transmembrane helix</keyword>
<sequence>MAAREGRAPLARRAAIYGVVGLAAIAGVAMWSGAGPHRGTGAAGDAPDAAAVGGVAAAAPQAAVPASAGLPPSLAGSSAPRLPLDAGGHLAKSRAVRDFFDYCLTARSDLSAAALDALVVREIAAQLDGTVAQVEALDVWHRYRAYLDALATLRDAGAVDKSDLGALQLALDQRASIAYRTLGDWSQPFFGAEQWRQRYDLARLKITQDRSLTDAQKAERLAALQQQMPADERAAQQRVDRQRAAIDQIAQLQKSGATPDAMRAQLTQTLGPEAAARVAQMQQDDASWQSRYADYAAQRAQIESAGLSPQDRDAQIAALRQRVFTKPGEAVRAASLDRGAGSAH</sequence>
<dbReference type="EMBL" id="CP000379">
    <property type="protein sequence ID" value="ABF79332.1"/>
    <property type="molecule type" value="Genomic_DNA"/>
</dbReference>
<dbReference type="SMR" id="Q1BM23"/>
<dbReference type="HOGENOM" id="CLU_064928_1_0_4"/>
<dbReference type="GO" id="GO:0005886">
    <property type="term" value="C:plasma membrane"/>
    <property type="evidence" value="ECO:0007669"/>
    <property type="project" value="UniProtKB-SubCell"/>
</dbReference>
<dbReference type="GO" id="GO:0051082">
    <property type="term" value="F:unfolded protein binding"/>
    <property type="evidence" value="ECO:0007669"/>
    <property type="project" value="UniProtKB-UniRule"/>
</dbReference>
<dbReference type="GO" id="GO:0016042">
    <property type="term" value="P:lipid catabolic process"/>
    <property type="evidence" value="ECO:0007669"/>
    <property type="project" value="UniProtKB-UniRule"/>
</dbReference>
<dbReference type="GO" id="GO:0006457">
    <property type="term" value="P:protein folding"/>
    <property type="evidence" value="ECO:0007669"/>
    <property type="project" value="UniProtKB-UniRule"/>
</dbReference>
<dbReference type="HAMAP" id="MF_00790">
    <property type="entry name" value="Lipase_chap"/>
    <property type="match status" value="1"/>
</dbReference>
<dbReference type="InterPro" id="IPR004961">
    <property type="entry name" value="Lipase_chaperone"/>
</dbReference>
<dbReference type="NCBIfam" id="NF002333">
    <property type="entry name" value="PRK01294.1-1"/>
    <property type="match status" value="1"/>
</dbReference>
<dbReference type="Pfam" id="PF03280">
    <property type="entry name" value="Lipase_chap"/>
    <property type="match status" value="1"/>
</dbReference>
<dbReference type="SUPFAM" id="SSF158855">
    <property type="entry name" value="Lipase chaperone-like"/>
    <property type="match status" value="1"/>
</dbReference>
<feature type="chain" id="PRO_1000046911" description="Lipase chaperone">
    <location>
        <begin position="1"/>
        <end position="344"/>
    </location>
</feature>
<feature type="transmembrane region" description="Helical" evidence="2">
    <location>
        <begin position="14"/>
        <end position="34"/>
    </location>
</feature>
<name>LIFO_BURO1</name>
<organism>
    <name type="scientific">Burkholderia orbicola (strain AU 1054)</name>
    <dbReference type="NCBI Taxonomy" id="331271"/>
    <lineage>
        <taxon>Bacteria</taxon>
        <taxon>Pseudomonadati</taxon>
        <taxon>Pseudomonadota</taxon>
        <taxon>Betaproteobacteria</taxon>
        <taxon>Burkholderiales</taxon>
        <taxon>Burkholderiaceae</taxon>
        <taxon>Burkholderia</taxon>
        <taxon>Burkholderia cepacia complex</taxon>
        <taxon>Burkholderia orbicola</taxon>
    </lineage>
</organism>
<reference key="1">
    <citation type="submission" date="2006-05" db="EMBL/GenBank/DDBJ databases">
        <title>Complete sequence of chromosome 2 of Burkholderia cenocepacia AU 1054.</title>
        <authorList>
            <consortium name="US DOE Joint Genome Institute"/>
            <person name="Copeland A."/>
            <person name="Lucas S."/>
            <person name="Lapidus A."/>
            <person name="Barry K."/>
            <person name="Detter J.C."/>
            <person name="Glavina del Rio T."/>
            <person name="Hammon N."/>
            <person name="Israni S."/>
            <person name="Dalin E."/>
            <person name="Tice H."/>
            <person name="Pitluck S."/>
            <person name="Chain P."/>
            <person name="Malfatti S."/>
            <person name="Shin M."/>
            <person name="Vergez L."/>
            <person name="Schmutz J."/>
            <person name="Larimer F."/>
            <person name="Land M."/>
            <person name="Hauser L."/>
            <person name="Kyrpides N."/>
            <person name="Lykidis A."/>
            <person name="LiPuma J.J."/>
            <person name="Konstantinidis K."/>
            <person name="Tiedje J.M."/>
            <person name="Richardson P."/>
        </authorList>
    </citation>
    <scope>NUCLEOTIDE SEQUENCE [LARGE SCALE GENOMIC DNA]</scope>
    <source>
        <strain>AU 1054</strain>
    </source>
</reference>
<comment type="function">
    <text evidence="2">May be involved in the folding of the extracellular lipase during its passage through the periplasm.</text>
</comment>
<comment type="subcellular location">
    <subcellularLocation>
        <location evidence="2">Cell inner membrane</location>
        <topology evidence="2">Single-pass membrane protein</topology>
        <orientation evidence="1">Periplasmic side</orientation>
    </subcellularLocation>
</comment>
<comment type="similarity">
    <text evidence="2">Belongs to the lipase chaperone family.</text>
</comment>
<proteinExistence type="inferred from homology"/>
<evidence type="ECO:0000250" key="1"/>
<evidence type="ECO:0000255" key="2">
    <source>
        <dbReference type="HAMAP-Rule" id="MF_00790"/>
    </source>
</evidence>
<accession>Q1BM23</accession>